<comment type="function">
    <text>May be involved in mediating interactions between NapC and a quinol oxidase.</text>
</comment>
<comment type="subcellular location">
    <subcellularLocation>
        <location>Cell inner membrane</location>
        <topology>Single-pass membrane protein</topology>
    </subcellularLocation>
</comment>
<sequence>MIDSAKETDRPKHRKRDEVIAFLILAVVIWPILSVAIVGGYGFLVWMSQIIFGPPGPMH</sequence>
<organism>
    <name type="scientific">Paracoccus pantotrophus</name>
    <name type="common">Thiosphaera pantotropha</name>
    <dbReference type="NCBI Taxonomy" id="82367"/>
    <lineage>
        <taxon>Bacteria</taxon>
        <taxon>Pseudomonadati</taxon>
        <taxon>Pseudomonadota</taxon>
        <taxon>Alphaproteobacteria</taxon>
        <taxon>Rhodobacterales</taxon>
        <taxon>Paracoccaceae</taxon>
        <taxon>Paracoccus</taxon>
    </lineage>
</organism>
<evidence type="ECO:0000255" key="1"/>
<gene>
    <name type="primary">napE</name>
</gene>
<protein>
    <recommendedName>
        <fullName>Protein NapE</fullName>
    </recommendedName>
</protein>
<name>NAPE_PARPN</name>
<keyword id="KW-0997">Cell inner membrane</keyword>
<keyword id="KW-1003">Cell membrane</keyword>
<keyword id="KW-0472">Membrane</keyword>
<keyword id="KW-0812">Transmembrane</keyword>
<keyword id="KW-1133">Transmembrane helix</keyword>
<accession>Q56348</accession>
<feature type="chain" id="PRO_0000096717" description="Protein NapE">
    <location>
        <begin position="1"/>
        <end position="59"/>
    </location>
</feature>
<feature type="topological domain" description="Cytoplasmic" evidence="1">
    <location>
        <begin position="1"/>
        <end position="18"/>
    </location>
</feature>
<feature type="transmembrane region" description="Helical" evidence="1">
    <location>
        <begin position="19"/>
        <end position="43"/>
    </location>
</feature>
<feature type="topological domain" description="Periplasmic" evidence="1">
    <location>
        <begin position="44"/>
        <end position="59"/>
    </location>
</feature>
<dbReference type="EMBL" id="Z36773">
    <property type="protein sequence ID" value="CAA85344.1"/>
    <property type="molecule type" value="Genomic_DNA"/>
</dbReference>
<dbReference type="PIR" id="S56139">
    <property type="entry name" value="S56139"/>
</dbReference>
<dbReference type="RefSeq" id="WP_024845626.1">
    <property type="nucleotide sequence ID" value="NZ_CP038205.1"/>
</dbReference>
<dbReference type="SMR" id="Q56348"/>
<dbReference type="STRING" id="82367.SAMN04244567_03480"/>
<dbReference type="GeneID" id="51370614"/>
<dbReference type="eggNOG" id="COG4459">
    <property type="taxonomic scope" value="Bacteria"/>
</dbReference>
<dbReference type="OrthoDB" id="7596241at2"/>
<dbReference type="GO" id="GO:0005886">
    <property type="term" value="C:plasma membrane"/>
    <property type="evidence" value="ECO:0007669"/>
    <property type="project" value="UniProtKB-SubCell"/>
</dbReference>
<dbReference type="InterPro" id="IPR010649">
    <property type="entry name" value="NapE_TorE"/>
</dbReference>
<dbReference type="InterPro" id="IPR004448">
    <property type="entry name" value="Nitrate_reductase_NapE"/>
</dbReference>
<dbReference type="NCBIfam" id="TIGR02973">
    <property type="entry name" value="nitrate_rd_NapE"/>
    <property type="match status" value="1"/>
</dbReference>
<dbReference type="Pfam" id="PF06796">
    <property type="entry name" value="NapE"/>
    <property type="match status" value="1"/>
</dbReference>
<proteinExistence type="predicted"/>
<reference key="1">
    <citation type="journal article" date="1995" name="Biochem. J.">
        <title>The napEDABC gene cluster encoding the periplasmic nitrate reductase system of Thiosphaera pantotropha.</title>
        <authorList>
            <person name="Berks B.C."/>
            <person name="Richardson D.J."/>
            <person name="Reilly A."/>
            <person name="Willis A.C."/>
            <person name="Ferguson S.J."/>
        </authorList>
    </citation>
    <scope>NUCLEOTIDE SEQUENCE [GENOMIC DNA]</scope>
    <source>
        <strain>ATCC 35512 / DSM 2944 / CIP 106514 / LMD 82.5 / NBRC 102493 / NCCB 82005 / GB17</strain>
    </source>
</reference>